<accession>Q819U3</accession>
<feature type="chain" id="PRO_0000350029" description="Probable dual-specificity RNA methyltransferase RlmN">
    <location>
        <begin position="1"/>
        <end position="362"/>
    </location>
</feature>
<feature type="domain" description="Radical SAM core" evidence="2">
    <location>
        <begin position="111"/>
        <end position="344"/>
    </location>
</feature>
<feature type="active site" description="Proton acceptor" evidence="1">
    <location>
        <position position="105"/>
    </location>
</feature>
<feature type="active site" description="S-methylcysteine intermediate" evidence="1">
    <location>
        <position position="349"/>
    </location>
</feature>
<feature type="binding site" evidence="1">
    <location>
        <position position="125"/>
    </location>
    <ligand>
        <name>[4Fe-4S] cluster</name>
        <dbReference type="ChEBI" id="CHEBI:49883"/>
        <note>4Fe-4S-S-AdoMet</note>
    </ligand>
</feature>
<feature type="binding site" evidence="1">
    <location>
        <position position="129"/>
    </location>
    <ligand>
        <name>[4Fe-4S] cluster</name>
        <dbReference type="ChEBI" id="CHEBI:49883"/>
        <note>4Fe-4S-S-AdoMet</note>
    </ligand>
</feature>
<feature type="binding site" evidence="1">
    <location>
        <position position="132"/>
    </location>
    <ligand>
        <name>[4Fe-4S] cluster</name>
        <dbReference type="ChEBI" id="CHEBI:49883"/>
        <note>4Fe-4S-S-AdoMet</note>
    </ligand>
</feature>
<feature type="binding site" evidence="1">
    <location>
        <begin position="175"/>
        <end position="176"/>
    </location>
    <ligand>
        <name>S-adenosyl-L-methionine</name>
        <dbReference type="ChEBI" id="CHEBI:59789"/>
    </ligand>
</feature>
<feature type="binding site" evidence="1">
    <location>
        <position position="207"/>
    </location>
    <ligand>
        <name>S-adenosyl-L-methionine</name>
        <dbReference type="ChEBI" id="CHEBI:59789"/>
    </ligand>
</feature>
<feature type="binding site" evidence="1">
    <location>
        <begin position="230"/>
        <end position="232"/>
    </location>
    <ligand>
        <name>S-adenosyl-L-methionine</name>
        <dbReference type="ChEBI" id="CHEBI:59789"/>
    </ligand>
</feature>
<feature type="binding site" evidence="1">
    <location>
        <position position="306"/>
    </location>
    <ligand>
        <name>S-adenosyl-L-methionine</name>
        <dbReference type="ChEBI" id="CHEBI:59789"/>
    </ligand>
</feature>
<feature type="disulfide bond" description="(transient)" evidence="1">
    <location>
        <begin position="118"/>
        <end position="349"/>
    </location>
</feature>
<protein>
    <recommendedName>
        <fullName evidence="1">Probable dual-specificity RNA methyltransferase RlmN</fullName>
        <ecNumber evidence="1">2.1.1.192</ecNumber>
    </recommendedName>
    <alternativeName>
        <fullName evidence="1">23S rRNA (adenine(2503)-C(2))-methyltransferase</fullName>
    </alternativeName>
    <alternativeName>
        <fullName evidence="1">23S rRNA m2A2503 methyltransferase</fullName>
    </alternativeName>
    <alternativeName>
        <fullName evidence="1">Ribosomal RNA large subunit methyltransferase N</fullName>
    </alternativeName>
    <alternativeName>
        <fullName evidence="1">tRNA (adenine(37)-C(2))-methyltransferase</fullName>
    </alternativeName>
    <alternativeName>
        <fullName evidence="1">tRNA m2A37 methyltransferase</fullName>
    </alternativeName>
</protein>
<organism>
    <name type="scientific">Bacillus cereus (strain ATCC 14579 / DSM 31 / CCUG 7414 / JCM 2152 / NBRC 15305 / NCIMB 9373 / NCTC 2599 / NRRL B-3711)</name>
    <dbReference type="NCBI Taxonomy" id="226900"/>
    <lineage>
        <taxon>Bacteria</taxon>
        <taxon>Bacillati</taxon>
        <taxon>Bacillota</taxon>
        <taxon>Bacilli</taxon>
        <taxon>Bacillales</taxon>
        <taxon>Bacillaceae</taxon>
        <taxon>Bacillus</taxon>
        <taxon>Bacillus cereus group</taxon>
    </lineage>
</organism>
<proteinExistence type="inferred from homology"/>
<sequence length="362" mass="41567">METTVRKQKKNLETKKPSIYSLQLHEMQDWLKEQGEPKFRAGQIFDWLYKKRVKNYEDMSNLSKGLRDKLSNSFDITTLKTLVKQTSSDGTIKFLFQLYDGYSIETVLMRHEYGNSICVTTQVGCRIGCTFCASTLGGLKRNLEAGEIVAQVVEVQRALDETEERVSSLVVMGIGEPFDNYDNLMGFLRIINHEKGLHIGARHMTVSTSGIIPKIYKFAEEDLQINFAISLHAPNSELRSKLMPINRAYKLPDLMEAIKYYVNRTGRRITFEYGLFGGENDQVEHAEELAALLKGVKCHVNLIPVNYVPERDYVRTPREQIFLFEKTLKDRGVNVTIRREQGHDIDAACGQLRAKERKEETR</sequence>
<gene>
    <name evidence="1" type="primary">rlmN</name>
    <name type="ordered locus">BC_3862</name>
</gene>
<dbReference type="EC" id="2.1.1.192" evidence="1"/>
<dbReference type="EMBL" id="AE016877">
    <property type="protein sequence ID" value="AAP10784.1"/>
    <property type="molecule type" value="Genomic_DNA"/>
</dbReference>
<dbReference type="RefSeq" id="NP_833583.1">
    <property type="nucleotide sequence ID" value="NC_004722.1"/>
</dbReference>
<dbReference type="RefSeq" id="WP_000450540.1">
    <property type="nucleotide sequence ID" value="NZ_CP138336.1"/>
</dbReference>
<dbReference type="SMR" id="Q819U3"/>
<dbReference type="STRING" id="226900.BC_3862"/>
<dbReference type="KEGG" id="bce:BC3862"/>
<dbReference type="PATRIC" id="fig|226900.8.peg.3981"/>
<dbReference type="HOGENOM" id="CLU_029101_0_1_9"/>
<dbReference type="OrthoDB" id="9793973at2"/>
<dbReference type="Proteomes" id="UP000001417">
    <property type="component" value="Chromosome"/>
</dbReference>
<dbReference type="GO" id="GO:0005737">
    <property type="term" value="C:cytoplasm"/>
    <property type="evidence" value="ECO:0007669"/>
    <property type="project" value="UniProtKB-SubCell"/>
</dbReference>
<dbReference type="GO" id="GO:0051539">
    <property type="term" value="F:4 iron, 4 sulfur cluster binding"/>
    <property type="evidence" value="ECO:0007669"/>
    <property type="project" value="UniProtKB-UniRule"/>
</dbReference>
<dbReference type="GO" id="GO:0046872">
    <property type="term" value="F:metal ion binding"/>
    <property type="evidence" value="ECO:0007669"/>
    <property type="project" value="UniProtKB-KW"/>
</dbReference>
<dbReference type="GO" id="GO:0070040">
    <property type="term" value="F:rRNA (adenine(2503)-C2-)-methyltransferase activity"/>
    <property type="evidence" value="ECO:0007669"/>
    <property type="project" value="UniProtKB-UniRule"/>
</dbReference>
<dbReference type="GO" id="GO:0019843">
    <property type="term" value="F:rRNA binding"/>
    <property type="evidence" value="ECO:0007669"/>
    <property type="project" value="UniProtKB-UniRule"/>
</dbReference>
<dbReference type="GO" id="GO:0002935">
    <property type="term" value="F:tRNA (adenine(37)-C2)-methyltransferase activity"/>
    <property type="evidence" value="ECO:0007669"/>
    <property type="project" value="UniProtKB-UniRule"/>
</dbReference>
<dbReference type="GO" id="GO:0000049">
    <property type="term" value="F:tRNA binding"/>
    <property type="evidence" value="ECO:0007669"/>
    <property type="project" value="UniProtKB-UniRule"/>
</dbReference>
<dbReference type="GO" id="GO:0070475">
    <property type="term" value="P:rRNA base methylation"/>
    <property type="evidence" value="ECO:0000318"/>
    <property type="project" value="GO_Central"/>
</dbReference>
<dbReference type="GO" id="GO:0030488">
    <property type="term" value="P:tRNA methylation"/>
    <property type="evidence" value="ECO:0000318"/>
    <property type="project" value="GO_Central"/>
</dbReference>
<dbReference type="CDD" id="cd01335">
    <property type="entry name" value="Radical_SAM"/>
    <property type="match status" value="1"/>
</dbReference>
<dbReference type="FunFam" id="1.10.150.530:FF:000002">
    <property type="entry name" value="Probable dual-specificity RNA methyltransferase RlmN"/>
    <property type="match status" value="1"/>
</dbReference>
<dbReference type="FunFam" id="3.20.20.70:FF:000014">
    <property type="entry name" value="Probable dual-specificity RNA methyltransferase RlmN"/>
    <property type="match status" value="1"/>
</dbReference>
<dbReference type="Gene3D" id="1.10.150.530">
    <property type="match status" value="1"/>
</dbReference>
<dbReference type="Gene3D" id="3.20.20.70">
    <property type="entry name" value="Aldolase class I"/>
    <property type="match status" value="1"/>
</dbReference>
<dbReference type="HAMAP" id="MF_01849">
    <property type="entry name" value="RNA_methyltr_RlmN"/>
    <property type="match status" value="1"/>
</dbReference>
<dbReference type="InterPro" id="IPR013785">
    <property type="entry name" value="Aldolase_TIM"/>
</dbReference>
<dbReference type="InterPro" id="IPR040072">
    <property type="entry name" value="Methyltransferase_A"/>
</dbReference>
<dbReference type="InterPro" id="IPR048641">
    <property type="entry name" value="RlmN_N"/>
</dbReference>
<dbReference type="InterPro" id="IPR027492">
    <property type="entry name" value="RNA_MTrfase_RlmN"/>
</dbReference>
<dbReference type="InterPro" id="IPR004383">
    <property type="entry name" value="rRNA_lsu_MTrfase_RlmN/Cfr"/>
</dbReference>
<dbReference type="InterPro" id="IPR007197">
    <property type="entry name" value="rSAM"/>
</dbReference>
<dbReference type="NCBIfam" id="TIGR00048">
    <property type="entry name" value="rRNA_mod_RlmN"/>
    <property type="match status" value="1"/>
</dbReference>
<dbReference type="PANTHER" id="PTHR30544">
    <property type="entry name" value="23S RRNA METHYLTRANSFERASE"/>
    <property type="match status" value="1"/>
</dbReference>
<dbReference type="PANTHER" id="PTHR30544:SF5">
    <property type="entry name" value="RADICAL SAM CORE DOMAIN-CONTAINING PROTEIN"/>
    <property type="match status" value="1"/>
</dbReference>
<dbReference type="Pfam" id="PF04055">
    <property type="entry name" value="Radical_SAM"/>
    <property type="match status" value="1"/>
</dbReference>
<dbReference type="Pfam" id="PF21016">
    <property type="entry name" value="RlmN_N"/>
    <property type="match status" value="1"/>
</dbReference>
<dbReference type="PIRSF" id="PIRSF006004">
    <property type="entry name" value="CHP00048"/>
    <property type="match status" value="1"/>
</dbReference>
<dbReference type="SFLD" id="SFLDF00275">
    <property type="entry name" value="adenosine_C2_methyltransferase"/>
    <property type="match status" value="1"/>
</dbReference>
<dbReference type="SFLD" id="SFLDS00029">
    <property type="entry name" value="Radical_SAM"/>
    <property type="match status" value="1"/>
</dbReference>
<dbReference type="SUPFAM" id="SSF102114">
    <property type="entry name" value="Radical SAM enzymes"/>
    <property type="match status" value="1"/>
</dbReference>
<dbReference type="PROSITE" id="PS51918">
    <property type="entry name" value="RADICAL_SAM"/>
    <property type="match status" value="1"/>
</dbReference>
<reference key="1">
    <citation type="journal article" date="2003" name="Nature">
        <title>Genome sequence of Bacillus cereus and comparative analysis with Bacillus anthracis.</title>
        <authorList>
            <person name="Ivanova N."/>
            <person name="Sorokin A."/>
            <person name="Anderson I."/>
            <person name="Galleron N."/>
            <person name="Candelon B."/>
            <person name="Kapatral V."/>
            <person name="Bhattacharyya A."/>
            <person name="Reznik G."/>
            <person name="Mikhailova N."/>
            <person name="Lapidus A."/>
            <person name="Chu L."/>
            <person name="Mazur M."/>
            <person name="Goltsman E."/>
            <person name="Larsen N."/>
            <person name="D'Souza M."/>
            <person name="Walunas T."/>
            <person name="Grechkin Y."/>
            <person name="Pusch G."/>
            <person name="Haselkorn R."/>
            <person name="Fonstein M."/>
            <person name="Ehrlich S.D."/>
            <person name="Overbeek R."/>
            <person name="Kyrpides N.C."/>
        </authorList>
    </citation>
    <scope>NUCLEOTIDE SEQUENCE [LARGE SCALE GENOMIC DNA]</scope>
    <source>
        <strain>ATCC 14579 / DSM 31 / CCUG 7414 / JCM 2152 / NBRC 15305 / NCIMB 9373 / NCTC 2599 / NRRL B-3711</strain>
    </source>
</reference>
<evidence type="ECO:0000255" key="1">
    <source>
        <dbReference type="HAMAP-Rule" id="MF_01849"/>
    </source>
</evidence>
<evidence type="ECO:0000255" key="2">
    <source>
        <dbReference type="PROSITE-ProRule" id="PRU01266"/>
    </source>
</evidence>
<keyword id="KW-0004">4Fe-4S</keyword>
<keyword id="KW-0963">Cytoplasm</keyword>
<keyword id="KW-1015">Disulfide bond</keyword>
<keyword id="KW-0408">Iron</keyword>
<keyword id="KW-0411">Iron-sulfur</keyword>
<keyword id="KW-0479">Metal-binding</keyword>
<keyword id="KW-0489">Methyltransferase</keyword>
<keyword id="KW-1185">Reference proteome</keyword>
<keyword id="KW-0698">rRNA processing</keyword>
<keyword id="KW-0949">S-adenosyl-L-methionine</keyword>
<keyword id="KW-0808">Transferase</keyword>
<keyword id="KW-0819">tRNA processing</keyword>
<name>RLMN_BACCR</name>
<comment type="function">
    <text evidence="1">Specifically methylates position 2 of adenine 2503 in 23S rRNA and position 2 of adenine 37 in tRNAs.</text>
</comment>
<comment type="catalytic activity">
    <reaction evidence="1">
        <text>adenosine(2503) in 23S rRNA + 2 reduced [2Fe-2S]-[ferredoxin] + 2 S-adenosyl-L-methionine = 2-methyladenosine(2503) in 23S rRNA + 5'-deoxyadenosine + L-methionine + 2 oxidized [2Fe-2S]-[ferredoxin] + S-adenosyl-L-homocysteine</text>
        <dbReference type="Rhea" id="RHEA:42916"/>
        <dbReference type="Rhea" id="RHEA-COMP:10000"/>
        <dbReference type="Rhea" id="RHEA-COMP:10001"/>
        <dbReference type="Rhea" id="RHEA-COMP:10152"/>
        <dbReference type="Rhea" id="RHEA-COMP:10282"/>
        <dbReference type="ChEBI" id="CHEBI:17319"/>
        <dbReference type="ChEBI" id="CHEBI:33737"/>
        <dbReference type="ChEBI" id="CHEBI:33738"/>
        <dbReference type="ChEBI" id="CHEBI:57844"/>
        <dbReference type="ChEBI" id="CHEBI:57856"/>
        <dbReference type="ChEBI" id="CHEBI:59789"/>
        <dbReference type="ChEBI" id="CHEBI:74411"/>
        <dbReference type="ChEBI" id="CHEBI:74497"/>
        <dbReference type="EC" id="2.1.1.192"/>
    </reaction>
</comment>
<comment type="catalytic activity">
    <reaction evidence="1">
        <text>adenosine(37) in tRNA + 2 reduced [2Fe-2S]-[ferredoxin] + 2 S-adenosyl-L-methionine = 2-methyladenosine(37) in tRNA + 5'-deoxyadenosine + L-methionine + 2 oxidized [2Fe-2S]-[ferredoxin] + S-adenosyl-L-homocysteine</text>
        <dbReference type="Rhea" id="RHEA:43332"/>
        <dbReference type="Rhea" id="RHEA-COMP:10000"/>
        <dbReference type="Rhea" id="RHEA-COMP:10001"/>
        <dbReference type="Rhea" id="RHEA-COMP:10162"/>
        <dbReference type="Rhea" id="RHEA-COMP:10485"/>
        <dbReference type="ChEBI" id="CHEBI:17319"/>
        <dbReference type="ChEBI" id="CHEBI:33737"/>
        <dbReference type="ChEBI" id="CHEBI:33738"/>
        <dbReference type="ChEBI" id="CHEBI:57844"/>
        <dbReference type="ChEBI" id="CHEBI:57856"/>
        <dbReference type="ChEBI" id="CHEBI:59789"/>
        <dbReference type="ChEBI" id="CHEBI:74411"/>
        <dbReference type="ChEBI" id="CHEBI:74497"/>
        <dbReference type="EC" id="2.1.1.192"/>
    </reaction>
</comment>
<comment type="cofactor">
    <cofactor evidence="1">
        <name>[4Fe-4S] cluster</name>
        <dbReference type="ChEBI" id="CHEBI:49883"/>
    </cofactor>
    <text evidence="1">Binds 1 [4Fe-4S] cluster. The cluster is coordinated with 3 cysteines and an exchangeable S-adenosyl-L-methionine.</text>
</comment>
<comment type="subcellular location">
    <subcellularLocation>
        <location evidence="1">Cytoplasm</location>
    </subcellularLocation>
</comment>
<comment type="miscellaneous">
    <text evidence="1">Reaction proceeds by a ping-pong mechanism involving intermediate methylation of a conserved cysteine residue.</text>
</comment>
<comment type="similarity">
    <text evidence="1">Belongs to the radical SAM superfamily. RlmN family.</text>
</comment>